<accession>B3PI88</accession>
<sequence length="398" mass="42668">MPSHLDQTLAAALSERRAQYRYRQRKLLQSPQTPELVVDGKTYLAFCSNDYLGLANHPQVIAAQQQAAARWGAGSGASHLVAGHTQEHHALEEELAAFTGRQRALLFSTGYMANLGVISTLVGQGDGVFEDRLNHASLLDGGLLSGARFQRFLHSDINNLQARLRKTDAARKLVVVDGVFSMDGDCAPLPQLAQVCAQENAWLMVDDAHGFGVLGETGAGTCEHFGLDQQQVPVLMGTLGKALGSFGAFVAGSETLIETLINFARPYIYTTAMPPPVAAATRASLRLVQSEAWRRTHVQQLIAQFRNGAQDLGLQLMDSFSPVQPLLVGSEAKALAIAEALAHRGILIIAIRPPTVPVGSSRLRITLSAAHTEAQVAQLLDVLGEVMNSTAIRGLADD</sequence>
<keyword id="KW-0093">Biotin biosynthesis</keyword>
<keyword id="KW-0663">Pyridoxal phosphate</keyword>
<keyword id="KW-1185">Reference proteome</keyword>
<keyword id="KW-0808">Transferase</keyword>
<evidence type="ECO:0000255" key="1">
    <source>
        <dbReference type="HAMAP-Rule" id="MF_01693"/>
    </source>
</evidence>
<evidence type="ECO:0000305" key="2"/>
<comment type="function">
    <text evidence="1">Catalyzes the decarboxylative condensation of pimeloyl-[acyl-carrier protein] and L-alanine to produce 8-amino-7-oxononanoate (AON), [acyl-carrier protein], and carbon dioxide.</text>
</comment>
<comment type="catalytic activity">
    <reaction evidence="1">
        <text>6-carboxyhexanoyl-[ACP] + L-alanine + H(+) = (8S)-8-amino-7-oxononanoate + holo-[ACP] + CO2</text>
        <dbReference type="Rhea" id="RHEA:42288"/>
        <dbReference type="Rhea" id="RHEA-COMP:9685"/>
        <dbReference type="Rhea" id="RHEA-COMP:9955"/>
        <dbReference type="ChEBI" id="CHEBI:15378"/>
        <dbReference type="ChEBI" id="CHEBI:16526"/>
        <dbReference type="ChEBI" id="CHEBI:57972"/>
        <dbReference type="ChEBI" id="CHEBI:64479"/>
        <dbReference type="ChEBI" id="CHEBI:78846"/>
        <dbReference type="ChEBI" id="CHEBI:149468"/>
        <dbReference type="EC" id="2.3.1.47"/>
    </reaction>
</comment>
<comment type="cofactor">
    <cofactor evidence="1">
        <name>pyridoxal 5'-phosphate</name>
        <dbReference type="ChEBI" id="CHEBI:597326"/>
    </cofactor>
</comment>
<comment type="pathway">
    <text evidence="1">Cofactor biosynthesis; biotin biosynthesis.</text>
</comment>
<comment type="subunit">
    <text evidence="1">Homodimer.</text>
</comment>
<comment type="similarity">
    <text evidence="1">Belongs to the class-II pyridoxal-phosphate-dependent aminotransferase family. BioF subfamily.</text>
</comment>
<comment type="sequence caution" evidence="2">
    <conflict type="erroneous initiation">
        <sequence resource="EMBL-CDS" id="ACE83909"/>
    </conflict>
</comment>
<protein>
    <recommendedName>
        <fullName evidence="1">8-amino-7-oxononanoate synthase</fullName>
        <shortName evidence="1">AONS</shortName>
        <ecNumber evidence="1">2.3.1.47</ecNumber>
    </recommendedName>
    <alternativeName>
        <fullName evidence="1">7-keto-8-amino-pelargonic acid synthase</fullName>
        <shortName evidence="1">7-KAP synthase</shortName>
        <shortName evidence="1">KAPA synthase</shortName>
    </alternativeName>
    <alternativeName>
        <fullName evidence="1">8-amino-7-ketopelargonate synthase</fullName>
    </alternativeName>
</protein>
<proteinExistence type="inferred from homology"/>
<gene>
    <name evidence="1" type="primary">bioF</name>
    <name type="ordered locus">CJA_0427</name>
</gene>
<reference key="1">
    <citation type="journal article" date="2008" name="J. Bacteriol.">
        <title>Insights into plant cell wall degradation from the genome sequence of the soil bacterium Cellvibrio japonicus.</title>
        <authorList>
            <person name="DeBoy R.T."/>
            <person name="Mongodin E.F."/>
            <person name="Fouts D.E."/>
            <person name="Tailford L.E."/>
            <person name="Khouri H."/>
            <person name="Emerson J.B."/>
            <person name="Mohamoud Y."/>
            <person name="Watkins K."/>
            <person name="Henrissat B."/>
            <person name="Gilbert H.J."/>
            <person name="Nelson K.E."/>
        </authorList>
    </citation>
    <scope>NUCLEOTIDE SEQUENCE [LARGE SCALE GENOMIC DNA]</scope>
    <source>
        <strain>Ueda107</strain>
    </source>
</reference>
<dbReference type="EC" id="2.3.1.47" evidence="1"/>
<dbReference type="EMBL" id="CP000934">
    <property type="protein sequence ID" value="ACE83909.1"/>
    <property type="status" value="ALT_INIT"/>
    <property type="molecule type" value="Genomic_DNA"/>
</dbReference>
<dbReference type="RefSeq" id="WP_041550932.1">
    <property type="nucleotide sequence ID" value="NC_010995.1"/>
</dbReference>
<dbReference type="SMR" id="B3PI88"/>
<dbReference type="STRING" id="498211.CJA_0427"/>
<dbReference type="KEGG" id="cja:CJA_0427"/>
<dbReference type="eggNOG" id="COG0156">
    <property type="taxonomic scope" value="Bacteria"/>
</dbReference>
<dbReference type="HOGENOM" id="CLU_015846_11_2_6"/>
<dbReference type="OrthoDB" id="9807157at2"/>
<dbReference type="UniPathway" id="UPA00078"/>
<dbReference type="Proteomes" id="UP000001036">
    <property type="component" value="Chromosome"/>
</dbReference>
<dbReference type="GO" id="GO:0008710">
    <property type="term" value="F:8-amino-7-oxononanoate synthase activity"/>
    <property type="evidence" value="ECO:0007669"/>
    <property type="project" value="UniProtKB-UniRule"/>
</dbReference>
<dbReference type="GO" id="GO:0030170">
    <property type="term" value="F:pyridoxal phosphate binding"/>
    <property type="evidence" value="ECO:0007669"/>
    <property type="project" value="UniProtKB-UniRule"/>
</dbReference>
<dbReference type="GO" id="GO:0009102">
    <property type="term" value="P:biotin biosynthetic process"/>
    <property type="evidence" value="ECO:0007669"/>
    <property type="project" value="UniProtKB-UniRule"/>
</dbReference>
<dbReference type="CDD" id="cd06454">
    <property type="entry name" value="KBL_like"/>
    <property type="match status" value="1"/>
</dbReference>
<dbReference type="Gene3D" id="3.90.1150.10">
    <property type="entry name" value="Aspartate Aminotransferase, domain 1"/>
    <property type="match status" value="1"/>
</dbReference>
<dbReference type="Gene3D" id="3.40.640.10">
    <property type="entry name" value="Type I PLP-dependent aspartate aminotransferase-like (Major domain)"/>
    <property type="match status" value="1"/>
</dbReference>
<dbReference type="HAMAP" id="MF_01693">
    <property type="entry name" value="BioF_aminotrans_2"/>
    <property type="match status" value="1"/>
</dbReference>
<dbReference type="InterPro" id="IPR001917">
    <property type="entry name" value="Aminotrans_II_pyridoxalP_BS"/>
</dbReference>
<dbReference type="InterPro" id="IPR004839">
    <property type="entry name" value="Aminotransferase_I/II_large"/>
</dbReference>
<dbReference type="InterPro" id="IPR050087">
    <property type="entry name" value="AON_synthase_class-II"/>
</dbReference>
<dbReference type="InterPro" id="IPR004723">
    <property type="entry name" value="AONS_Archaea/Proteobacteria"/>
</dbReference>
<dbReference type="InterPro" id="IPR022834">
    <property type="entry name" value="AONS_Proteobacteria"/>
</dbReference>
<dbReference type="InterPro" id="IPR015424">
    <property type="entry name" value="PyrdxlP-dep_Trfase"/>
</dbReference>
<dbReference type="InterPro" id="IPR015421">
    <property type="entry name" value="PyrdxlP-dep_Trfase_major"/>
</dbReference>
<dbReference type="InterPro" id="IPR015422">
    <property type="entry name" value="PyrdxlP-dep_Trfase_small"/>
</dbReference>
<dbReference type="NCBIfam" id="TIGR00858">
    <property type="entry name" value="bioF"/>
    <property type="match status" value="1"/>
</dbReference>
<dbReference type="PANTHER" id="PTHR13693:SF100">
    <property type="entry name" value="8-AMINO-7-OXONONANOATE SYNTHASE"/>
    <property type="match status" value="1"/>
</dbReference>
<dbReference type="PANTHER" id="PTHR13693">
    <property type="entry name" value="CLASS II AMINOTRANSFERASE/8-AMINO-7-OXONONANOATE SYNTHASE"/>
    <property type="match status" value="1"/>
</dbReference>
<dbReference type="Pfam" id="PF00155">
    <property type="entry name" value="Aminotran_1_2"/>
    <property type="match status" value="1"/>
</dbReference>
<dbReference type="SUPFAM" id="SSF53383">
    <property type="entry name" value="PLP-dependent transferases"/>
    <property type="match status" value="1"/>
</dbReference>
<dbReference type="PROSITE" id="PS00599">
    <property type="entry name" value="AA_TRANSFER_CLASS_2"/>
    <property type="match status" value="1"/>
</dbReference>
<name>BIOF_CELJU</name>
<feature type="chain" id="PRO_0000380951" description="8-amino-7-oxononanoate synthase">
    <location>
        <begin position="1"/>
        <end position="398"/>
    </location>
</feature>
<feature type="binding site" evidence="1">
    <location>
        <position position="23"/>
    </location>
    <ligand>
        <name>substrate</name>
    </ligand>
</feature>
<feature type="binding site" evidence="1">
    <location>
        <begin position="110"/>
        <end position="111"/>
    </location>
    <ligand>
        <name>pyridoxal 5'-phosphate</name>
        <dbReference type="ChEBI" id="CHEBI:597326"/>
    </ligand>
</feature>
<feature type="binding site" evidence="1">
    <location>
        <position position="135"/>
    </location>
    <ligand>
        <name>substrate</name>
    </ligand>
</feature>
<feature type="binding site" evidence="1">
    <location>
        <position position="181"/>
    </location>
    <ligand>
        <name>pyridoxal 5'-phosphate</name>
        <dbReference type="ChEBI" id="CHEBI:597326"/>
    </ligand>
</feature>
<feature type="binding site" evidence="1">
    <location>
        <position position="209"/>
    </location>
    <ligand>
        <name>pyridoxal 5'-phosphate</name>
        <dbReference type="ChEBI" id="CHEBI:597326"/>
    </ligand>
</feature>
<feature type="binding site" evidence="1">
    <location>
        <position position="238"/>
    </location>
    <ligand>
        <name>pyridoxal 5'-phosphate</name>
        <dbReference type="ChEBI" id="CHEBI:597326"/>
    </ligand>
</feature>
<feature type="binding site" evidence="1">
    <location>
        <position position="355"/>
    </location>
    <ligand>
        <name>substrate</name>
    </ligand>
</feature>
<feature type="modified residue" description="N6-(pyridoxal phosphate)lysine" evidence="1">
    <location>
        <position position="241"/>
    </location>
</feature>
<organism>
    <name type="scientific">Cellvibrio japonicus (strain Ueda107)</name>
    <name type="common">Pseudomonas fluorescens subsp. cellulosa</name>
    <dbReference type="NCBI Taxonomy" id="498211"/>
    <lineage>
        <taxon>Bacteria</taxon>
        <taxon>Pseudomonadati</taxon>
        <taxon>Pseudomonadota</taxon>
        <taxon>Gammaproteobacteria</taxon>
        <taxon>Cellvibrionales</taxon>
        <taxon>Cellvibrionaceae</taxon>
        <taxon>Cellvibrio</taxon>
    </lineage>
</organism>